<sequence length="458" mass="49175">MFAKAQRVHFIGIGGIGMSGIAEIVLNLGYAVSGSDLRRTSITARLESLGVVLFEGHAAANVIGSGVVVVSSAIDEENPEVREARARKIPVIQRAEMLAELMRLKYGIAVAGMHGKTTTTSMIASVLAAGELDPTVVVGGRVDALGSNARLGNSHYLVAEADESDRSFLKLSPILTVVTNLDREHMDCYRDMADVEDAFLEFMNRVPFYGANVACIDNPQLAALLPRVRRRVFTYGTSLGADFVVRMLPPAPEVRSRFEIASAQSVLGPFDLHVPGIHNVLNAAAAVAIAVQLDLKEQAIVQGLKSFRGVDRRFQLKGVVDGITIIDDYGHHPTEIRATLRAARDCGYANIHVLFQPHRYSRTRDLLDEFVTSFADASTVEMLDIYAASEAPLPGITSAALVQSIGQPGVRYAASTEEAVTAILDRAAPGDLILTLGAGNVSQLAPLLVERLQSRLPA</sequence>
<protein>
    <recommendedName>
        <fullName evidence="1">UDP-N-acetylmuramate--L-alanine ligase</fullName>
        <ecNumber evidence="1">6.3.2.8</ecNumber>
    </recommendedName>
    <alternativeName>
        <fullName evidence="1">UDP-N-acetylmuramoyl-L-alanine synthetase</fullName>
    </alternativeName>
</protein>
<evidence type="ECO:0000255" key="1">
    <source>
        <dbReference type="HAMAP-Rule" id="MF_00046"/>
    </source>
</evidence>
<feature type="chain" id="PRO_1000192086" description="UDP-N-acetylmuramate--L-alanine ligase">
    <location>
        <begin position="1"/>
        <end position="458"/>
    </location>
</feature>
<feature type="binding site" evidence="1">
    <location>
        <begin position="112"/>
        <end position="118"/>
    </location>
    <ligand>
        <name>ATP</name>
        <dbReference type="ChEBI" id="CHEBI:30616"/>
    </ligand>
</feature>
<dbReference type="EC" id="6.3.2.8" evidence="1"/>
<dbReference type="EMBL" id="CP001472">
    <property type="protein sequence ID" value="ACO33628.1"/>
    <property type="molecule type" value="Genomic_DNA"/>
</dbReference>
<dbReference type="RefSeq" id="WP_015896241.1">
    <property type="nucleotide sequence ID" value="NC_012483.1"/>
</dbReference>
<dbReference type="SMR" id="C1F455"/>
<dbReference type="FunCoup" id="C1F455">
    <property type="interactions" value="306"/>
</dbReference>
<dbReference type="STRING" id="240015.ACP_1083"/>
<dbReference type="KEGG" id="aca:ACP_1083"/>
<dbReference type="eggNOG" id="COG0773">
    <property type="taxonomic scope" value="Bacteria"/>
</dbReference>
<dbReference type="HOGENOM" id="CLU_028104_2_2_0"/>
<dbReference type="InParanoid" id="C1F455"/>
<dbReference type="OrthoDB" id="9804126at2"/>
<dbReference type="UniPathway" id="UPA00219"/>
<dbReference type="Proteomes" id="UP000002207">
    <property type="component" value="Chromosome"/>
</dbReference>
<dbReference type="GO" id="GO:0005737">
    <property type="term" value="C:cytoplasm"/>
    <property type="evidence" value="ECO:0007669"/>
    <property type="project" value="UniProtKB-SubCell"/>
</dbReference>
<dbReference type="GO" id="GO:0005524">
    <property type="term" value="F:ATP binding"/>
    <property type="evidence" value="ECO:0007669"/>
    <property type="project" value="UniProtKB-UniRule"/>
</dbReference>
<dbReference type="GO" id="GO:0008763">
    <property type="term" value="F:UDP-N-acetylmuramate-L-alanine ligase activity"/>
    <property type="evidence" value="ECO:0007669"/>
    <property type="project" value="UniProtKB-UniRule"/>
</dbReference>
<dbReference type="GO" id="GO:0051301">
    <property type="term" value="P:cell division"/>
    <property type="evidence" value="ECO:0007669"/>
    <property type="project" value="UniProtKB-KW"/>
</dbReference>
<dbReference type="GO" id="GO:0071555">
    <property type="term" value="P:cell wall organization"/>
    <property type="evidence" value="ECO:0007669"/>
    <property type="project" value="UniProtKB-KW"/>
</dbReference>
<dbReference type="GO" id="GO:0009252">
    <property type="term" value="P:peptidoglycan biosynthetic process"/>
    <property type="evidence" value="ECO:0007669"/>
    <property type="project" value="UniProtKB-UniRule"/>
</dbReference>
<dbReference type="GO" id="GO:0008360">
    <property type="term" value="P:regulation of cell shape"/>
    <property type="evidence" value="ECO:0007669"/>
    <property type="project" value="UniProtKB-KW"/>
</dbReference>
<dbReference type="Gene3D" id="3.90.190.20">
    <property type="entry name" value="Mur ligase, C-terminal domain"/>
    <property type="match status" value="1"/>
</dbReference>
<dbReference type="Gene3D" id="3.40.1190.10">
    <property type="entry name" value="Mur-like, catalytic domain"/>
    <property type="match status" value="1"/>
</dbReference>
<dbReference type="Gene3D" id="3.40.50.720">
    <property type="entry name" value="NAD(P)-binding Rossmann-like Domain"/>
    <property type="match status" value="1"/>
</dbReference>
<dbReference type="HAMAP" id="MF_00046">
    <property type="entry name" value="MurC"/>
    <property type="match status" value="1"/>
</dbReference>
<dbReference type="InterPro" id="IPR036565">
    <property type="entry name" value="Mur-like_cat_sf"/>
</dbReference>
<dbReference type="InterPro" id="IPR004101">
    <property type="entry name" value="Mur_ligase_C"/>
</dbReference>
<dbReference type="InterPro" id="IPR036615">
    <property type="entry name" value="Mur_ligase_C_dom_sf"/>
</dbReference>
<dbReference type="InterPro" id="IPR013221">
    <property type="entry name" value="Mur_ligase_cen"/>
</dbReference>
<dbReference type="InterPro" id="IPR000713">
    <property type="entry name" value="Mur_ligase_N"/>
</dbReference>
<dbReference type="InterPro" id="IPR050061">
    <property type="entry name" value="MurCDEF_pg_biosynth"/>
</dbReference>
<dbReference type="InterPro" id="IPR005758">
    <property type="entry name" value="UDP-N-AcMur_Ala_ligase_MurC"/>
</dbReference>
<dbReference type="NCBIfam" id="TIGR01082">
    <property type="entry name" value="murC"/>
    <property type="match status" value="1"/>
</dbReference>
<dbReference type="PANTHER" id="PTHR43445:SF3">
    <property type="entry name" value="UDP-N-ACETYLMURAMATE--L-ALANINE LIGASE"/>
    <property type="match status" value="1"/>
</dbReference>
<dbReference type="PANTHER" id="PTHR43445">
    <property type="entry name" value="UDP-N-ACETYLMURAMATE--L-ALANINE LIGASE-RELATED"/>
    <property type="match status" value="1"/>
</dbReference>
<dbReference type="Pfam" id="PF01225">
    <property type="entry name" value="Mur_ligase"/>
    <property type="match status" value="1"/>
</dbReference>
<dbReference type="Pfam" id="PF02875">
    <property type="entry name" value="Mur_ligase_C"/>
    <property type="match status" value="1"/>
</dbReference>
<dbReference type="Pfam" id="PF08245">
    <property type="entry name" value="Mur_ligase_M"/>
    <property type="match status" value="1"/>
</dbReference>
<dbReference type="SUPFAM" id="SSF51984">
    <property type="entry name" value="MurCD N-terminal domain"/>
    <property type="match status" value="1"/>
</dbReference>
<dbReference type="SUPFAM" id="SSF53623">
    <property type="entry name" value="MurD-like peptide ligases, catalytic domain"/>
    <property type="match status" value="1"/>
</dbReference>
<dbReference type="SUPFAM" id="SSF53244">
    <property type="entry name" value="MurD-like peptide ligases, peptide-binding domain"/>
    <property type="match status" value="1"/>
</dbReference>
<gene>
    <name evidence="1" type="primary">murC</name>
    <name type="ordered locus">ACP_1083</name>
</gene>
<accession>C1F455</accession>
<name>MURC_ACIC5</name>
<comment type="function">
    <text evidence="1">Cell wall formation.</text>
</comment>
<comment type="catalytic activity">
    <reaction evidence="1">
        <text>UDP-N-acetyl-alpha-D-muramate + L-alanine + ATP = UDP-N-acetyl-alpha-D-muramoyl-L-alanine + ADP + phosphate + H(+)</text>
        <dbReference type="Rhea" id="RHEA:23372"/>
        <dbReference type="ChEBI" id="CHEBI:15378"/>
        <dbReference type="ChEBI" id="CHEBI:30616"/>
        <dbReference type="ChEBI" id="CHEBI:43474"/>
        <dbReference type="ChEBI" id="CHEBI:57972"/>
        <dbReference type="ChEBI" id="CHEBI:70757"/>
        <dbReference type="ChEBI" id="CHEBI:83898"/>
        <dbReference type="ChEBI" id="CHEBI:456216"/>
        <dbReference type="EC" id="6.3.2.8"/>
    </reaction>
</comment>
<comment type="pathway">
    <text evidence="1">Cell wall biogenesis; peptidoglycan biosynthesis.</text>
</comment>
<comment type="subcellular location">
    <subcellularLocation>
        <location evidence="1">Cytoplasm</location>
    </subcellularLocation>
</comment>
<comment type="similarity">
    <text evidence="1">Belongs to the MurCDEF family.</text>
</comment>
<organism>
    <name type="scientific">Acidobacterium capsulatum (strain ATCC 51196 / DSM 11244 / BCRC 80197 / JCM 7670 / NBRC 15755 / NCIMB 13165 / 161)</name>
    <dbReference type="NCBI Taxonomy" id="240015"/>
    <lineage>
        <taxon>Bacteria</taxon>
        <taxon>Pseudomonadati</taxon>
        <taxon>Acidobacteriota</taxon>
        <taxon>Terriglobia</taxon>
        <taxon>Terriglobales</taxon>
        <taxon>Acidobacteriaceae</taxon>
        <taxon>Acidobacterium</taxon>
    </lineage>
</organism>
<proteinExistence type="inferred from homology"/>
<keyword id="KW-0067">ATP-binding</keyword>
<keyword id="KW-0131">Cell cycle</keyword>
<keyword id="KW-0132">Cell division</keyword>
<keyword id="KW-0133">Cell shape</keyword>
<keyword id="KW-0961">Cell wall biogenesis/degradation</keyword>
<keyword id="KW-0963">Cytoplasm</keyword>
<keyword id="KW-0436">Ligase</keyword>
<keyword id="KW-0547">Nucleotide-binding</keyword>
<keyword id="KW-0573">Peptidoglycan synthesis</keyword>
<keyword id="KW-1185">Reference proteome</keyword>
<reference key="1">
    <citation type="journal article" date="2009" name="Appl. Environ. Microbiol.">
        <title>Three genomes from the phylum Acidobacteria provide insight into the lifestyles of these microorganisms in soils.</title>
        <authorList>
            <person name="Ward N.L."/>
            <person name="Challacombe J.F."/>
            <person name="Janssen P.H."/>
            <person name="Henrissat B."/>
            <person name="Coutinho P.M."/>
            <person name="Wu M."/>
            <person name="Xie G."/>
            <person name="Haft D.H."/>
            <person name="Sait M."/>
            <person name="Badger J."/>
            <person name="Barabote R.D."/>
            <person name="Bradley B."/>
            <person name="Brettin T.S."/>
            <person name="Brinkac L.M."/>
            <person name="Bruce D."/>
            <person name="Creasy T."/>
            <person name="Daugherty S.C."/>
            <person name="Davidsen T.M."/>
            <person name="DeBoy R.T."/>
            <person name="Detter J.C."/>
            <person name="Dodson R.J."/>
            <person name="Durkin A.S."/>
            <person name="Ganapathy A."/>
            <person name="Gwinn-Giglio M."/>
            <person name="Han C.S."/>
            <person name="Khouri H."/>
            <person name="Kiss H."/>
            <person name="Kothari S.P."/>
            <person name="Madupu R."/>
            <person name="Nelson K.E."/>
            <person name="Nelson W.C."/>
            <person name="Paulsen I."/>
            <person name="Penn K."/>
            <person name="Ren Q."/>
            <person name="Rosovitz M.J."/>
            <person name="Selengut J.D."/>
            <person name="Shrivastava S."/>
            <person name="Sullivan S.A."/>
            <person name="Tapia R."/>
            <person name="Thompson L.S."/>
            <person name="Watkins K.L."/>
            <person name="Yang Q."/>
            <person name="Yu C."/>
            <person name="Zafar N."/>
            <person name="Zhou L."/>
            <person name="Kuske C.R."/>
        </authorList>
    </citation>
    <scope>NUCLEOTIDE SEQUENCE [LARGE SCALE GENOMIC DNA]</scope>
    <source>
        <strain>ATCC 51196 / DSM 11244 / BCRC 80197 / JCM 7670 / NBRC 15755 / NCIMB 13165 / 161</strain>
    </source>
</reference>